<name>DER_PORGI</name>
<keyword id="KW-0342">GTP-binding</keyword>
<keyword id="KW-0547">Nucleotide-binding</keyword>
<keyword id="KW-1185">Reference proteome</keyword>
<keyword id="KW-0677">Repeat</keyword>
<keyword id="KW-0690">Ribosome biogenesis</keyword>
<accession>Q7MT48</accession>
<proteinExistence type="inferred from homology"/>
<evidence type="ECO:0000255" key="1">
    <source>
        <dbReference type="HAMAP-Rule" id="MF_00195"/>
    </source>
</evidence>
<protein>
    <recommendedName>
        <fullName evidence="1">GTPase Der</fullName>
    </recommendedName>
    <alternativeName>
        <fullName evidence="1">GTP-binding protein EngA</fullName>
    </alternativeName>
</protein>
<feature type="chain" id="PRO_0000179026" description="GTPase Der">
    <location>
        <begin position="1"/>
        <end position="437"/>
    </location>
</feature>
<feature type="domain" description="EngA-type G 1">
    <location>
        <begin position="3"/>
        <end position="167"/>
    </location>
</feature>
<feature type="domain" description="EngA-type G 2">
    <location>
        <begin position="177"/>
        <end position="353"/>
    </location>
</feature>
<feature type="domain" description="KH-like" evidence="1">
    <location>
        <begin position="354"/>
        <end position="437"/>
    </location>
</feature>
<feature type="binding site" evidence="1">
    <location>
        <begin position="9"/>
        <end position="16"/>
    </location>
    <ligand>
        <name>GTP</name>
        <dbReference type="ChEBI" id="CHEBI:37565"/>
        <label>1</label>
    </ligand>
</feature>
<feature type="binding site" evidence="1">
    <location>
        <begin position="56"/>
        <end position="60"/>
    </location>
    <ligand>
        <name>GTP</name>
        <dbReference type="ChEBI" id="CHEBI:37565"/>
        <label>1</label>
    </ligand>
</feature>
<feature type="binding site" evidence="1">
    <location>
        <begin position="119"/>
        <end position="122"/>
    </location>
    <ligand>
        <name>GTP</name>
        <dbReference type="ChEBI" id="CHEBI:37565"/>
        <label>1</label>
    </ligand>
</feature>
<feature type="binding site" evidence="1">
    <location>
        <begin position="183"/>
        <end position="190"/>
    </location>
    <ligand>
        <name>GTP</name>
        <dbReference type="ChEBI" id="CHEBI:37565"/>
        <label>2</label>
    </ligand>
</feature>
<feature type="binding site" evidence="1">
    <location>
        <begin position="230"/>
        <end position="234"/>
    </location>
    <ligand>
        <name>GTP</name>
        <dbReference type="ChEBI" id="CHEBI:37565"/>
        <label>2</label>
    </ligand>
</feature>
<feature type="binding site" evidence="1">
    <location>
        <begin position="295"/>
        <end position="298"/>
    </location>
    <ligand>
        <name>GTP</name>
        <dbReference type="ChEBI" id="CHEBI:37565"/>
        <label>2</label>
    </ligand>
</feature>
<gene>
    <name evidence="1" type="primary">der</name>
    <name type="synonym">engA</name>
    <name type="ordered locus">PG_2143</name>
</gene>
<reference key="1">
    <citation type="journal article" date="2003" name="J. Bacteriol.">
        <title>Complete genome sequence of the oral pathogenic bacterium Porphyromonas gingivalis strain W83.</title>
        <authorList>
            <person name="Nelson K.E."/>
            <person name="Fleischmann R.D."/>
            <person name="DeBoy R.T."/>
            <person name="Paulsen I.T."/>
            <person name="Fouts D.E."/>
            <person name="Eisen J.A."/>
            <person name="Daugherty S.C."/>
            <person name="Dodson R.J."/>
            <person name="Durkin A.S."/>
            <person name="Gwinn M.L."/>
            <person name="Haft D.H."/>
            <person name="Kolonay J.F."/>
            <person name="Nelson W.C."/>
            <person name="Mason T.M."/>
            <person name="Tallon L."/>
            <person name="Gray J."/>
            <person name="Granger D."/>
            <person name="Tettelin H."/>
            <person name="Dong H."/>
            <person name="Galvin J.L."/>
            <person name="Duncan M.J."/>
            <person name="Dewhirst F.E."/>
            <person name="Fraser C.M."/>
        </authorList>
    </citation>
    <scope>NUCLEOTIDE SEQUENCE [LARGE SCALE GENOMIC DNA]</scope>
    <source>
        <strain>ATCC BAA-308 / W83</strain>
    </source>
</reference>
<sequence length="437" mass="49239">MGALVAIVGRPNVGKSTLFNRLTQSRQAIVAEEAGTTRDRQYGRVHWNGREFSIVDTGGWVVNSEDVFEEEINKQVYIAVEEADVVLFVADNQTGVTSLDEQVAEILRRSKKPVIVVANKVDNTEDHYSASEFYSFGLGDPYCIAAVSGSGTGDLLDRVMELLPAENGQSDLDETLPRIAIVGRPNAGKSSLLNAFIGEDRHIVTDIAGTTRDSIYTKYNKFGLNFYLVDTAGIRKRGKVNEDLEYYSVIRSIRAIENSDVCVLMLDATRGVESQDLNIFQIIQRNSKGLVVCINKWDLVEDKSQAVIKTFENAIRQRFAPFTDFPLLFISAMTKQRIFKVLETVNQVYAHRSTRIPTHKLNEVMLPIIEATPPPATKGKYIKIKYVMQLPTAVPSFAFFANLPQWVKEPYKRFLENQIRAHWDFCGTPINIFIREK</sequence>
<comment type="function">
    <text evidence="1">GTPase that plays an essential role in the late steps of ribosome biogenesis.</text>
</comment>
<comment type="subunit">
    <text evidence="1">Associates with the 50S ribosomal subunit.</text>
</comment>
<comment type="similarity">
    <text evidence="1">Belongs to the TRAFAC class TrmE-Era-EngA-EngB-Septin-like GTPase superfamily. EngA (Der) GTPase family.</text>
</comment>
<dbReference type="EMBL" id="AE015924">
    <property type="protein sequence ID" value="AAQ67096.1"/>
    <property type="molecule type" value="Genomic_DNA"/>
</dbReference>
<dbReference type="RefSeq" id="WP_005873469.1">
    <property type="nucleotide sequence ID" value="NC_002950.2"/>
</dbReference>
<dbReference type="SMR" id="Q7MT48"/>
<dbReference type="STRING" id="242619.PG_2143"/>
<dbReference type="EnsemblBacteria" id="AAQ67096">
    <property type="protein sequence ID" value="AAQ67096"/>
    <property type="gene ID" value="PG_2143"/>
</dbReference>
<dbReference type="GeneID" id="29255436"/>
<dbReference type="KEGG" id="pgi:PG_2143"/>
<dbReference type="eggNOG" id="COG1160">
    <property type="taxonomic scope" value="Bacteria"/>
</dbReference>
<dbReference type="HOGENOM" id="CLU_016077_6_2_10"/>
<dbReference type="Proteomes" id="UP000000588">
    <property type="component" value="Chromosome"/>
</dbReference>
<dbReference type="GO" id="GO:0005525">
    <property type="term" value="F:GTP binding"/>
    <property type="evidence" value="ECO:0007669"/>
    <property type="project" value="UniProtKB-UniRule"/>
</dbReference>
<dbReference type="GO" id="GO:0043022">
    <property type="term" value="F:ribosome binding"/>
    <property type="evidence" value="ECO:0007669"/>
    <property type="project" value="TreeGrafter"/>
</dbReference>
<dbReference type="GO" id="GO:0042254">
    <property type="term" value="P:ribosome biogenesis"/>
    <property type="evidence" value="ECO:0007669"/>
    <property type="project" value="UniProtKB-KW"/>
</dbReference>
<dbReference type="CDD" id="cd01894">
    <property type="entry name" value="EngA1"/>
    <property type="match status" value="1"/>
</dbReference>
<dbReference type="CDD" id="cd01895">
    <property type="entry name" value="EngA2"/>
    <property type="match status" value="1"/>
</dbReference>
<dbReference type="FunFam" id="3.30.300.20:FF:000004">
    <property type="entry name" value="GTPase Der"/>
    <property type="match status" value="1"/>
</dbReference>
<dbReference type="FunFam" id="3.40.50.300:FF:000040">
    <property type="entry name" value="GTPase Der"/>
    <property type="match status" value="1"/>
</dbReference>
<dbReference type="FunFam" id="3.40.50.300:FF:000953">
    <property type="entry name" value="GTPase Der"/>
    <property type="match status" value="1"/>
</dbReference>
<dbReference type="Gene3D" id="3.30.300.20">
    <property type="match status" value="1"/>
</dbReference>
<dbReference type="Gene3D" id="3.40.50.300">
    <property type="entry name" value="P-loop containing nucleotide triphosphate hydrolases"/>
    <property type="match status" value="2"/>
</dbReference>
<dbReference type="HAMAP" id="MF_00195">
    <property type="entry name" value="GTPase_Der"/>
    <property type="match status" value="1"/>
</dbReference>
<dbReference type="InterPro" id="IPR031166">
    <property type="entry name" value="G_ENGA"/>
</dbReference>
<dbReference type="InterPro" id="IPR006073">
    <property type="entry name" value="GTP-bd"/>
</dbReference>
<dbReference type="InterPro" id="IPR016484">
    <property type="entry name" value="GTPase_Der"/>
</dbReference>
<dbReference type="InterPro" id="IPR032859">
    <property type="entry name" value="KH_dom-like"/>
</dbReference>
<dbReference type="InterPro" id="IPR015946">
    <property type="entry name" value="KH_dom-like_a/b"/>
</dbReference>
<dbReference type="InterPro" id="IPR027417">
    <property type="entry name" value="P-loop_NTPase"/>
</dbReference>
<dbReference type="InterPro" id="IPR005225">
    <property type="entry name" value="Small_GTP-bd"/>
</dbReference>
<dbReference type="NCBIfam" id="TIGR03594">
    <property type="entry name" value="GTPase_EngA"/>
    <property type="match status" value="1"/>
</dbReference>
<dbReference type="NCBIfam" id="TIGR00231">
    <property type="entry name" value="small_GTP"/>
    <property type="match status" value="2"/>
</dbReference>
<dbReference type="PANTHER" id="PTHR43834">
    <property type="entry name" value="GTPASE DER"/>
    <property type="match status" value="1"/>
</dbReference>
<dbReference type="PANTHER" id="PTHR43834:SF6">
    <property type="entry name" value="GTPASE DER"/>
    <property type="match status" value="1"/>
</dbReference>
<dbReference type="Pfam" id="PF14714">
    <property type="entry name" value="KH_dom-like"/>
    <property type="match status" value="1"/>
</dbReference>
<dbReference type="Pfam" id="PF01926">
    <property type="entry name" value="MMR_HSR1"/>
    <property type="match status" value="2"/>
</dbReference>
<dbReference type="PIRSF" id="PIRSF006485">
    <property type="entry name" value="GTP-binding_EngA"/>
    <property type="match status" value="1"/>
</dbReference>
<dbReference type="PRINTS" id="PR00326">
    <property type="entry name" value="GTP1OBG"/>
</dbReference>
<dbReference type="SUPFAM" id="SSF52540">
    <property type="entry name" value="P-loop containing nucleoside triphosphate hydrolases"/>
    <property type="match status" value="2"/>
</dbReference>
<dbReference type="PROSITE" id="PS51712">
    <property type="entry name" value="G_ENGA"/>
    <property type="match status" value="2"/>
</dbReference>
<organism>
    <name type="scientific">Porphyromonas gingivalis (strain ATCC BAA-308 / W83)</name>
    <dbReference type="NCBI Taxonomy" id="242619"/>
    <lineage>
        <taxon>Bacteria</taxon>
        <taxon>Pseudomonadati</taxon>
        <taxon>Bacteroidota</taxon>
        <taxon>Bacteroidia</taxon>
        <taxon>Bacteroidales</taxon>
        <taxon>Porphyromonadaceae</taxon>
        <taxon>Porphyromonas</taxon>
    </lineage>
</organism>